<keyword id="KW-0067">ATP-binding</keyword>
<keyword id="KW-0963">Cytoplasm</keyword>
<keyword id="KW-0418">Kinase</keyword>
<keyword id="KW-0460">Magnesium</keyword>
<keyword id="KW-0479">Metal-binding</keyword>
<keyword id="KW-0546">Nucleotide metabolism</keyword>
<keyword id="KW-0547">Nucleotide-binding</keyword>
<keyword id="KW-0597">Phosphoprotein</keyword>
<keyword id="KW-0808">Transferase</keyword>
<feature type="chain" id="PRO_1000192253" description="Nucleoside diphosphate kinase">
    <location>
        <begin position="1"/>
        <end position="143"/>
    </location>
</feature>
<feature type="active site" description="Pros-phosphohistidine intermediate" evidence="1">
    <location>
        <position position="117"/>
    </location>
</feature>
<feature type="binding site" evidence="1">
    <location>
        <position position="11"/>
    </location>
    <ligand>
        <name>ATP</name>
        <dbReference type="ChEBI" id="CHEBI:30616"/>
    </ligand>
</feature>
<feature type="binding site" evidence="1">
    <location>
        <position position="59"/>
    </location>
    <ligand>
        <name>ATP</name>
        <dbReference type="ChEBI" id="CHEBI:30616"/>
    </ligand>
</feature>
<feature type="binding site" evidence="1">
    <location>
        <position position="87"/>
    </location>
    <ligand>
        <name>ATP</name>
        <dbReference type="ChEBI" id="CHEBI:30616"/>
    </ligand>
</feature>
<feature type="binding site" evidence="1">
    <location>
        <position position="93"/>
    </location>
    <ligand>
        <name>ATP</name>
        <dbReference type="ChEBI" id="CHEBI:30616"/>
    </ligand>
</feature>
<feature type="binding site" evidence="1">
    <location>
        <position position="104"/>
    </location>
    <ligand>
        <name>ATP</name>
        <dbReference type="ChEBI" id="CHEBI:30616"/>
    </ligand>
</feature>
<feature type="binding site" evidence="1">
    <location>
        <position position="114"/>
    </location>
    <ligand>
        <name>ATP</name>
        <dbReference type="ChEBI" id="CHEBI:30616"/>
    </ligand>
</feature>
<organism>
    <name type="scientific">Alteromonas mediterranea (strain DSM 17117 / CIP 110805 / LMG 28347 / Deep ecotype)</name>
    <dbReference type="NCBI Taxonomy" id="1774373"/>
    <lineage>
        <taxon>Bacteria</taxon>
        <taxon>Pseudomonadati</taxon>
        <taxon>Pseudomonadota</taxon>
        <taxon>Gammaproteobacteria</taxon>
        <taxon>Alteromonadales</taxon>
        <taxon>Alteromonadaceae</taxon>
        <taxon>Alteromonas/Salinimonas group</taxon>
        <taxon>Alteromonas</taxon>
    </lineage>
</organism>
<name>NDK_ALTMD</name>
<proteinExistence type="inferred from homology"/>
<gene>
    <name evidence="1" type="primary">ndk</name>
    <name type="ordered locus">MADE_1012870</name>
</gene>
<sequence>MALERTFSIIKPDAVAKNVIGAIYNRFESAGLRIVASKMIHMSKEQAEGFYAEHKERPFFGALVDFMTSGPVMVQVLEGENAVLANREIMGATNPADAASGTLRSDYAASIDENAVHGSDAPESAAREIAYFFSEEEICPRTR</sequence>
<dbReference type="EC" id="2.7.4.6" evidence="1"/>
<dbReference type="EMBL" id="CP001103">
    <property type="protein sequence ID" value="AEA98708.2"/>
    <property type="molecule type" value="Genomic_DNA"/>
</dbReference>
<dbReference type="RefSeq" id="WP_020743948.1">
    <property type="nucleotide sequence ID" value="NC_011138.3"/>
</dbReference>
<dbReference type="SMR" id="B4RVH4"/>
<dbReference type="KEGG" id="amc:MADE_1012870"/>
<dbReference type="HOGENOM" id="CLU_060216_8_1_6"/>
<dbReference type="Proteomes" id="UP000001870">
    <property type="component" value="Chromosome"/>
</dbReference>
<dbReference type="GO" id="GO:0005737">
    <property type="term" value="C:cytoplasm"/>
    <property type="evidence" value="ECO:0007669"/>
    <property type="project" value="UniProtKB-SubCell"/>
</dbReference>
<dbReference type="GO" id="GO:0005524">
    <property type="term" value="F:ATP binding"/>
    <property type="evidence" value="ECO:0007669"/>
    <property type="project" value="UniProtKB-UniRule"/>
</dbReference>
<dbReference type="GO" id="GO:0046872">
    <property type="term" value="F:metal ion binding"/>
    <property type="evidence" value="ECO:0007669"/>
    <property type="project" value="UniProtKB-KW"/>
</dbReference>
<dbReference type="GO" id="GO:0004550">
    <property type="term" value="F:nucleoside diphosphate kinase activity"/>
    <property type="evidence" value="ECO:0007669"/>
    <property type="project" value="UniProtKB-UniRule"/>
</dbReference>
<dbReference type="GO" id="GO:0006241">
    <property type="term" value="P:CTP biosynthetic process"/>
    <property type="evidence" value="ECO:0007669"/>
    <property type="project" value="UniProtKB-UniRule"/>
</dbReference>
<dbReference type="GO" id="GO:0006183">
    <property type="term" value="P:GTP biosynthetic process"/>
    <property type="evidence" value="ECO:0007669"/>
    <property type="project" value="UniProtKB-UniRule"/>
</dbReference>
<dbReference type="GO" id="GO:0006228">
    <property type="term" value="P:UTP biosynthetic process"/>
    <property type="evidence" value="ECO:0007669"/>
    <property type="project" value="UniProtKB-UniRule"/>
</dbReference>
<dbReference type="CDD" id="cd04413">
    <property type="entry name" value="NDPk_I"/>
    <property type="match status" value="1"/>
</dbReference>
<dbReference type="FunFam" id="3.30.70.141:FF:000001">
    <property type="entry name" value="Nucleoside diphosphate kinase"/>
    <property type="match status" value="1"/>
</dbReference>
<dbReference type="Gene3D" id="3.30.70.141">
    <property type="entry name" value="Nucleoside diphosphate kinase-like domain"/>
    <property type="match status" value="1"/>
</dbReference>
<dbReference type="HAMAP" id="MF_00451">
    <property type="entry name" value="NDP_kinase"/>
    <property type="match status" value="1"/>
</dbReference>
<dbReference type="InterPro" id="IPR034907">
    <property type="entry name" value="NDK-like_dom"/>
</dbReference>
<dbReference type="InterPro" id="IPR036850">
    <property type="entry name" value="NDK-like_dom_sf"/>
</dbReference>
<dbReference type="InterPro" id="IPR001564">
    <property type="entry name" value="Nucleoside_diP_kinase"/>
</dbReference>
<dbReference type="InterPro" id="IPR023005">
    <property type="entry name" value="Nucleoside_diP_kinase_AS"/>
</dbReference>
<dbReference type="NCBIfam" id="NF001908">
    <property type="entry name" value="PRK00668.1"/>
    <property type="match status" value="1"/>
</dbReference>
<dbReference type="PANTHER" id="PTHR11349">
    <property type="entry name" value="NUCLEOSIDE DIPHOSPHATE KINASE"/>
    <property type="match status" value="1"/>
</dbReference>
<dbReference type="Pfam" id="PF00334">
    <property type="entry name" value="NDK"/>
    <property type="match status" value="1"/>
</dbReference>
<dbReference type="PRINTS" id="PR01243">
    <property type="entry name" value="NUCDPKINASE"/>
</dbReference>
<dbReference type="SMART" id="SM00562">
    <property type="entry name" value="NDK"/>
    <property type="match status" value="1"/>
</dbReference>
<dbReference type="SUPFAM" id="SSF54919">
    <property type="entry name" value="Nucleoside diphosphate kinase, NDK"/>
    <property type="match status" value="1"/>
</dbReference>
<dbReference type="PROSITE" id="PS00469">
    <property type="entry name" value="NDPK"/>
    <property type="match status" value="1"/>
</dbReference>
<dbReference type="PROSITE" id="PS51374">
    <property type="entry name" value="NDPK_LIKE"/>
    <property type="match status" value="1"/>
</dbReference>
<protein>
    <recommendedName>
        <fullName evidence="1">Nucleoside diphosphate kinase</fullName>
        <shortName evidence="1">NDK</shortName>
        <shortName evidence="1">NDP kinase</shortName>
        <ecNumber evidence="1">2.7.4.6</ecNumber>
    </recommendedName>
    <alternativeName>
        <fullName evidence="1">Nucleoside-2-P kinase</fullName>
    </alternativeName>
</protein>
<accession>B4RVH4</accession>
<accession>F2G7V9</accession>
<evidence type="ECO:0000255" key="1">
    <source>
        <dbReference type="HAMAP-Rule" id="MF_00451"/>
    </source>
</evidence>
<comment type="function">
    <text evidence="1">Major role in the synthesis of nucleoside triphosphates other than ATP. The ATP gamma phosphate is transferred to the NDP beta phosphate via a ping-pong mechanism, using a phosphorylated active-site intermediate.</text>
</comment>
<comment type="catalytic activity">
    <reaction evidence="1">
        <text>a 2'-deoxyribonucleoside 5'-diphosphate + ATP = a 2'-deoxyribonucleoside 5'-triphosphate + ADP</text>
        <dbReference type="Rhea" id="RHEA:44640"/>
        <dbReference type="ChEBI" id="CHEBI:30616"/>
        <dbReference type="ChEBI" id="CHEBI:61560"/>
        <dbReference type="ChEBI" id="CHEBI:73316"/>
        <dbReference type="ChEBI" id="CHEBI:456216"/>
        <dbReference type="EC" id="2.7.4.6"/>
    </reaction>
</comment>
<comment type="catalytic activity">
    <reaction evidence="1">
        <text>a ribonucleoside 5'-diphosphate + ATP = a ribonucleoside 5'-triphosphate + ADP</text>
        <dbReference type="Rhea" id="RHEA:18113"/>
        <dbReference type="ChEBI" id="CHEBI:30616"/>
        <dbReference type="ChEBI" id="CHEBI:57930"/>
        <dbReference type="ChEBI" id="CHEBI:61557"/>
        <dbReference type="ChEBI" id="CHEBI:456216"/>
        <dbReference type="EC" id="2.7.4.6"/>
    </reaction>
</comment>
<comment type="cofactor">
    <cofactor evidence="1">
        <name>Mg(2+)</name>
        <dbReference type="ChEBI" id="CHEBI:18420"/>
    </cofactor>
</comment>
<comment type="subunit">
    <text evidence="1">Homotetramer.</text>
</comment>
<comment type="subcellular location">
    <subcellularLocation>
        <location evidence="1">Cytoplasm</location>
    </subcellularLocation>
</comment>
<comment type="similarity">
    <text evidence="1">Belongs to the NDK family.</text>
</comment>
<reference key="1">
    <citation type="journal article" date="2008" name="ISME J.">
        <title>Comparative genomics of two ecotypes of the marine planktonic copiotroph Alteromonas macleodii suggests alternative lifestyles associated with different kinds of particulate organic matter.</title>
        <authorList>
            <person name="Ivars-Martinez E."/>
            <person name="Martin-Cuadrado A.-B."/>
            <person name="D'Auria G."/>
            <person name="Mira A."/>
            <person name="Ferriera S."/>
            <person name="Johnson J."/>
            <person name="Friedman R."/>
            <person name="Rodriguez-Valera F."/>
        </authorList>
    </citation>
    <scope>NUCLEOTIDE SEQUENCE [LARGE SCALE GENOMIC DNA]</scope>
    <source>
        <strain>DSM 17117 / CIP 110805 / LMG 28347 / Deep ecotype</strain>
    </source>
</reference>